<sequence>MSRQDVQRLLEEYQVINELLATLQAQHTTVSELLEELTTALDGVRLLKTEGGERLVHIGAGLFVLGTFNAREVLTPLGAGYHAFLDLENAERILKERIDEYSKVKTSLEENIEKLIERAAQIRQVLERLGIK</sequence>
<organism>
    <name type="scientific">Pyrobaculum islandicum (strain DSM 4184 / JCM 9189 / GEO3)</name>
    <dbReference type="NCBI Taxonomy" id="384616"/>
    <lineage>
        <taxon>Archaea</taxon>
        <taxon>Thermoproteota</taxon>
        <taxon>Thermoprotei</taxon>
        <taxon>Thermoproteales</taxon>
        <taxon>Thermoproteaceae</taxon>
        <taxon>Pyrobaculum</taxon>
    </lineage>
</organism>
<gene>
    <name evidence="1" type="primary">pfdA</name>
    <name type="ordered locus">Pisl_0460</name>
</gene>
<feature type="chain" id="PRO_0000300771" description="Prefoldin subunit alpha">
    <location>
        <begin position="1"/>
        <end position="132"/>
    </location>
</feature>
<keyword id="KW-0143">Chaperone</keyword>
<keyword id="KW-0963">Cytoplasm</keyword>
<accession>A1RRQ6</accession>
<reference key="1">
    <citation type="submission" date="2006-12" db="EMBL/GenBank/DDBJ databases">
        <title>Complete sequence of Pyrobaculum islandicum DSM 4184.</title>
        <authorList>
            <person name="Copeland A."/>
            <person name="Lucas S."/>
            <person name="Lapidus A."/>
            <person name="Barry K."/>
            <person name="Detter J.C."/>
            <person name="Glavina del Rio T."/>
            <person name="Dalin E."/>
            <person name="Tice H."/>
            <person name="Pitluck S."/>
            <person name="Meincke L."/>
            <person name="Brettin T."/>
            <person name="Bruce D."/>
            <person name="Han C."/>
            <person name="Tapia R."/>
            <person name="Gilna P."/>
            <person name="Schmutz J."/>
            <person name="Larimer F."/>
            <person name="Land M."/>
            <person name="Hauser L."/>
            <person name="Kyrpides N."/>
            <person name="Mikhailova N."/>
            <person name="Cozen A.E."/>
            <person name="Fitz-Gibbon S.T."/>
            <person name="House C.H."/>
            <person name="Saltikov C."/>
            <person name="Lowe T."/>
            <person name="Richardson P."/>
        </authorList>
    </citation>
    <scope>NUCLEOTIDE SEQUENCE [LARGE SCALE GENOMIC DNA]</scope>
    <source>
        <strain>DSM 4184 / JCM 9189 / GEO3</strain>
    </source>
</reference>
<protein>
    <recommendedName>
        <fullName evidence="1">Prefoldin subunit alpha</fullName>
    </recommendedName>
    <alternativeName>
        <fullName evidence="1">GimC subunit alpha</fullName>
    </alternativeName>
</protein>
<comment type="function">
    <text evidence="1">Molecular chaperone capable of stabilizing a range of proteins. Seems to fulfill an ATP-independent, HSP70-like function in archaeal de novo protein folding.</text>
</comment>
<comment type="subunit">
    <text evidence="1">Heterohexamer of two alpha and four beta subunits.</text>
</comment>
<comment type="subcellular location">
    <subcellularLocation>
        <location evidence="1">Cytoplasm</location>
    </subcellularLocation>
</comment>
<comment type="similarity">
    <text evidence="2">Belongs to the prefoldin subunit alpha family.</text>
</comment>
<proteinExistence type="inferred from homology"/>
<dbReference type="EMBL" id="CP000504">
    <property type="protein sequence ID" value="ABL87638.1"/>
    <property type="molecule type" value="Genomic_DNA"/>
</dbReference>
<dbReference type="RefSeq" id="WP_011762215.1">
    <property type="nucleotide sequence ID" value="NC_008701.1"/>
</dbReference>
<dbReference type="SMR" id="A1RRQ6"/>
<dbReference type="STRING" id="384616.Pisl_0460"/>
<dbReference type="GeneID" id="4618102"/>
<dbReference type="KEGG" id="pis:Pisl_0460"/>
<dbReference type="eggNOG" id="arCOG01341">
    <property type="taxonomic scope" value="Archaea"/>
</dbReference>
<dbReference type="HOGENOM" id="CLU_1912415_0_0_2"/>
<dbReference type="OrthoDB" id="27425at2157"/>
<dbReference type="Proteomes" id="UP000002595">
    <property type="component" value="Chromosome"/>
</dbReference>
<dbReference type="GO" id="GO:0005737">
    <property type="term" value="C:cytoplasm"/>
    <property type="evidence" value="ECO:0007669"/>
    <property type="project" value="UniProtKB-SubCell"/>
</dbReference>
<dbReference type="GO" id="GO:0016272">
    <property type="term" value="C:prefoldin complex"/>
    <property type="evidence" value="ECO:0007669"/>
    <property type="project" value="UniProtKB-UniRule"/>
</dbReference>
<dbReference type="GO" id="GO:0051082">
    <property type="term" value="F:unfolded protein binding"/>
    <property type="evidence" value="ECO:0007669"/>
    <property type="project" value="UniProtKB-UniRule"/>
</dbReference>
<dbReference type="GO" id="GO:0006457">
    <property type="term" value="P:protein folding"/>
    <property type="evidence" value="ECO:0007669"/>
    <property type="project" value="UniProtKB-UniRule"/>
</dbReference>
<dbReference type="CDD" id="cd23160">
    <property type="entry name" value="Prefoldin_alpha_GimC"/>
    <property type="match status" value="1"/>
</dbReference>
<dbReference type="Gene3D" id="1.10.287.370">
    <property type="match status" value="1"/>
</dbReference>
<dbReference type="HAMAP" id="MF_00308">
    <property type="entry name" value="PfdA"/>
    <property type="match status" value="1"/>
</dbReference>
<dbReference type="InterPro" id="IPR011599">
    <property type="entry name" value="PFD_alpha_archaea"/>
</dbReference>
<dbReference type="InterPro" id="IPR009053">
    <property type="entry name" value="Prefoldin"/>
</dbReference>
<dbReference type="InterPro" id="IPR004127">
    <property type="entry name" value="Prefoldin_subunit_alpha"/>
</dbReference>
<dbReference type="NCBIfam" id="TIGR00293">
    <property type="entry name" value="prefoldin subunit alpha"/>
    <property type="match status" value="1"/>
</dbReference>
<dbReference type="Pfam" id="PF02996">
    <property type="entry name" value="Prefoldin"/>
    <property type="match status" value="1"/>
</dbReference>
<dbReference type="SUPFAM" id="SSF46579">
    <property type="entry name" value="Prefoldin"/>
    <property type="match status" value="1"/>
</dbReference>
<evidence type="ECO:0000255" key="1">
    <source>
        <dbReference type="HAMAP-Rule" id="MF_00308"/>
    </source>
</evidence>
<evidence type="ECO:0000305" key="2"/>
<name>PFDA_PYRIL</name>